<evidence type="ECO:0000250" key="1">
    <source>
        <dbReference type="UniProtKB" id="Q15906"/>
    </source>
</evidence>
<evidence type="ECO:0000250" key="2">
    <source>
        <dbReference type="UniProtKB" id="Q62481"/>
    </source>
</evidence>
<evidence type="ECO:0000255" key="3"/>
<evidence type="ECO:0000256" key="4">
    <source>
        <dbReference type="SAM" id="MobiDB-lite"/>
    </source>
</evidence>
<evidence type="ECO:0000305" key="5"/>
<protein>
    <recommendedName>
        <fullName>Vacuolar protein sorting-associated protein 72 homolog</fullName>
    </recommendedName>
    <alternativeName>
        <fullName>Transcription factor-like 1</fullName>
    </alternativeName>
</protein>
<keyword id="KW-0156">Chromatin regulator</keyword>
<keyword id="KW-0238">DNA-binding</keyword>
<keyword id="KW-1017">Isopeptide bond</keyword>
<keyword id="KW-0539">Nucleus</keyword>
<keyword id="KW-0597">Phosphoprotein</keyword>
<keyword id="KW-1185">Reference proteome</keyword>
<keyword id="KW-0804">Transcription</keyword>
<keyword id="KW-0805">Transcription regulation</keyword>
<keyword id="KW-0832">Ubl conjugation</keyword>
<organism>
    <name type="scientific">Bos taurus</name>
    <name type="common">Bovine</name>
    <dbReference type="NCBI Taxonomy" id="9913"/>
    <lineage>
        <taxon>Eukaryota</taxon>
        <taxon>Metazoa</taxon>
        <taxon>Chordata</taxon>
        <taxon>Craniata</taxon>
        <taxon>Vertebrata</taxon>
        <taxon>Euteleostomi</taxon>
        <taxon>Mammalia</taxon>
        <taxon>Eutheria</taxon>
        <taxon>Laurasiatheria</taxon>
        <taxon>Artiodactyla</taxon>
        <taxon>Ruminantia</taxon>
        <taxon>Pecora</taxon>
        <taxon>Bovidae</taxon>
        <taxon>Bovinae</taxon>
        <taxon>Bos</taxon>
    </lineage>
</organism>
<reference key="1">
    <citation type="journal article" date="2005" name="BMC Genomics">
        <title>Characterization of 954 bovine full-CDS cDNA sequences.</title>
        <authorList>
            <person name="Harhay G.P."/>
            <person name="Sonstegard T.S."/>
            <person name="Keele J.W."/>
            <person name="Heaton M.P."/>
            <person name="Clawson M.L."/>
            <person name="Snelling W.M."/>
            <person name="Wiedmann R.T."/>
            <person name="Van Tassell C.P."/>
            <person name="Smith T.P.L."/>
        </authorList>
    </citation>
    <scope>NUCLEOTIDE SEQUENCE [LARGE SCALE MRNA]</scope>
</reference>
<reference key="2">
    <citation type="submission" date="2005-11" db="EMBL/GenBank/DDBJ databases">
        <authorList>
            <consortium name="NIH - Mammalian Gene Collection (MGC) project"/>
        </authorList>
    </citation>
    <scope>NUCLEOTIDE SEQUENCE [LARGE SCALE MRNA]</scope>
    <source>
        <strain>Crossbred X Angus</strain>
        <tissue>Liver</tissue>
    </source>
</reference>
<dbReference type="EMBL" id="BT020964">
    <property type="protein sequence ID" value="AAX08981.1"/>
    <property type="molecule type" value="mRNA"/>
</dbReference>
<dbReference type="EMBL" id="BC109639">
    <property type="protein sequence ID" value="AAI09640.1"/>
    <property type="molecule type" value="mRNA"/>
</dbReference>
<dbReference type="RefSeq" id="NP_001015658.1">
    <property type="nucleotide sequence ID" value="NM_001015658.1"/>
</dbReference>
<dbReference type="SMR" id="Q5E9F6"/>
<dbReference type="FunCoup" id="Q5E9F6">
    <property type="interactions" value="4333"/>
</dbReference>
<dbReference type="STRING" id="9913.ENSBTAP00000024063"/>
<dbReference type="PaxDb" id="9913-ENSBTAP00000024063"/>
<dbReference type="Ensembl" id="ENSBTAT00000099191.1">
    <property type="protein sequence ID" value="ENSBTAP00000076858.1"/>
    <property type="gene ID" value="ENSBTAG00000018074.5"/>
</dbReference>
<dbReference type="GeneID" id="534883"/>
<dbReference type="KEGG" id="bta:534883"/>
<dbReference type="CTD" id="6944"/>
<dbReference type="VEuPathDB" id="HostDB:ENSBTAG00000018074"/>
<dbReference type="VGNC" id="VGNC:36831">
    <property type="gene designation" value="VPS72"/>
</dbReference>
<dbReference type="eggNOG" id="KOG2897">
    <property type="taxonomic scope" value="Eukaryota"/>
</dbReference>
<dbReference type="GeneTree" id="ENSGT00390000017503"/>
<dbReference type="HOGENOM" id="CLU_040862_0_0_1"/>
<dbReference type="InParanoid" id="Q5E9F6"/>
<dbReference type="OMA" id="TGPTIRY"/>
<dbReference type="OrthoDB" id="78296at2759"/>
<dbReference type="TreeFam" id="TF314532"/>
<dbReference type="Proteomes" id="UP000009136">
    <property type="component" value="Chromosome 3"/>
</dbReference>
<dbReference type="Bgee" id="ENSBTAG00000018074">
    <property type="expression patterns" value="Expressed in oocyte and 105 other cell types or tissues"/>
</dbReference>
<dbReference type="GO" id="GO:0035267">
    <property type="term" value="C:NuA4 histone acetyltransferase complex"/>
    <property type="evidence" value="ECO:0007669"/>
    <property type="project" value="Ensembl"/>
</dbReference>
<dbReference type="GO" id="GO:0016607">
    <property type="term" value="C:nuclear speck"/>
    <property type="evidence" value="ECO:0007669"/>
    <property type="project" value="Ensembl"/>
</dbReference>
<dbReference type="GO" id="GO:0000786">
    <property type="term" value="C:nucleosome"/>
    <property type="evidence" value="ECO:0007669"/>
    <property type="project" value="Ensembl"/>
</dbReference>
<dbReference type="GO" id="GO:0005634">
    <property type="term" value="C:nucleus"/>
    <property type="evidence" value="ECO:0000318"/>
    <property type="project" value="GO_Central"/>
</dbReference>
<dbReference type="GO" id="GO:0032991">
    <property type="term" value="C:protein-containing complex"/>
    <property type="evidence" value="ECO:0000250"/>
    <property type="project" value="UniProtKB"/>
</dbReference>
<dbReference type="GO" id="GO:0003677">
    <property type="term" value="F:DNA binding"/>
    <property type="evidence" value="ECO:0007669"/>
    <property type="project" value="UniProtKB-KW"/>
</dbReference>
<dbReference type="GO" id="GO:0042393">
    <property type="term" value="F:histone binding"/>
    <property type="evidence" value="ECO:0000250"/>
    <property type="project" value="UniProtKB"/>
</dbReference>
<dbReference type="GO" id="GO:0140713">
    <property type="term" value="F:histone chaperone activity"/>
    <property type="evidence" value="ECO:0000250"/>
    <property type="project" value="UniProtKB"/>
</dbReference>
<dbReference type="GO" id="GO:1905168">
    <property type="term" value="P:positive regulation of double-strand break repair via homologous recombination"/>
    <property type="evidence" value="ECO:0007669"/>
    <property type="project" value="Ensembl"/>
</dbReference>
<dbReference type="GO" id="GO:0051726">
    <property type="term" value="P:regulation of cell cycle"/>
    <property type="evidence" value="ECO:0007669"/>
    <property type="project" value="Ensembl"/>
</dbReference>
<dbReference type="GO" id="GO:0035019">
    <property type="term" value="P:somatic stem cell population maintenance"/>
    <property type="evidence" value="ECO:0007669"/>
    <property type="project" value="Ensembl"/>
</dbReference>
<dbReference type="GO" id="GO:0045815">
    <property type="term" value="P:transcription initiation-coupled chromatin remodeling"/>
    <property type="evidence" value="ECO:0000250"/>
    <property type="project" value="UniProtKB"/>
</dbReference>
<dbReference type="InterPro" id="IPR013272">
    <property type="entry name" value="Vps72/YL1_C"/>
</dbReference>
<dbReference type="InterPro" id="IPR046757">
    <property type="entry name" value="YL1_N"/>
</dbReference>
<dbReference type="PANTHER" id="PTHR13275:SF4">
    <property type="entry name" value="VACUOLAR PROTEIN SORTING-ASSOCIATED PROTEIN 72 HOMOLOG"/>
    <property type="match status" value="1"/>
</dbReference>
<dbReference type="PANTHER" id="PTHR13275">
    <property type="entry name" value="YL-1 PROTEIN TRANSCRIPTION FACTOR-LIKE 1"/>
    <property type="match status" value="1"/>
</dbReference>
<dbReference type="Pfam" id="PF05764">
    <property type="entry name" value="YL1"/>
    <property type="match status" value="1"/>
</dbReference>
<dbReference type="Pfam" id="PF08265">
    <property type="entry name" value="YL1_C"/>
    <property type="match status" value="1"/>
</dbReference>
<dbReference type="SMART" id="SM00993">
    <property type="entry name" value="YL1_C"/>
    <property type="match status" value="1"/>
</dbReference>
<gene>
    <name type="primary">VPS72</name>
    <name type="synonym">TCFL1</name>
</gene>
<sequence>MSLAGGRAPRKTAGNRLSGLLEKEEEDEFYQTTYGGFTEESGDDEYQGDQSDTEDEVDSDFDIDEGDEPSSDGEAEEPRRKRRVVTKAYKEPLKSLRPRKVSTPAGSSQKTREEKALLPLELQDDGTDSRKSMRQSTAEHTRQTFLRVQERQGQSRRRKGPHCERPLTQEELLREAKITEELNLRSLETYERLEADKKKQVHKKRKCPGPIITYHSVTVPLVGEPGPKEENVDVEGLDPAPMASALAARAGTGPVIPPARCSRTFITFSDDATFEEWFPQGRTPKIPVREVCPVTHRPALYRDPVTDIPYATARAFKIIREAYKKYITAHGLPPTASALGPGPPPPEPLPGSGPRALRQKIVIK</sequence>
<comment type="function">
    <text evidence="1">Deposition-and-exchange histone chaperone specific for H2AZ1, specifically chaperones H2AZ1 and deposits it into nucleosomes. As component of the SRCAP complex, mediates the ATP-dependent exchange of histone H2AZ1/H2B dimers for nucleosomal H2A/H2B, leading to transcriptional regulation of selected genes by chromatin remodeling.</text>
</comment>
<comment type="subunit">
    <text evidence="1 2">Component of the NuA4 histone acetyltransferase complex which contains the catalytic subunit KAT5/TIP60 and the subunits EP400, TRRAP/PAF400, BRD8/SMAP, EPC1, DMAP1/DNMAP1, RUVBL1/TIP49, RUVBL2, ING3, actin, ACTL6A/BAF53A, MORF4L1/MRG15, MORF4L2/MRGX, MRGBP, YEATS4/GAS41 and VPS72/YL1. Component of a NuA4-related complex which contains EP400, TRRAP/PAF400, SRCAP, BRD8/SMAP, EPC1, DMAP1/DNMAP1, RUVBL1/TIP49, RUVBL2, actin, ACTL6A/BAF53A, VPS72 and YEATS4/GAS41. Also part of a multiprotein complex which contains SRCAP and which binds to H2AZ1/H2AZ. Interacts (via N-terminal domain) with H2AZ1; the interaction is enhanced by VPS72 phosphorylation which is promoted by ZNHIT1.</text>
</comment>
<comment type="subcellular location">
    <subcellularLocation>
        <location evidence="1">Nucleus</location>
    </subcellularLocation>
</comment>
<comment type="PTM">
    <text evidence="2">Phosphorylation is enhanced by ZNHIT1 and promotes the interaction of VPS72 with histone H2AZ1.</text>
</comment>
<comment type="similarity">
    <text evidence="5">Belongs to the VPS72/YL1 family.</text>
</comment>
<name>VPS72_BOVIN</name>
<proteinExistence type="evidence at transcript level"/>
<feature type="chain" id="PRO_0000239003" description="Vacuolar protein sorting-associated protein 72 homolog">
    <location>
        <begin position="1"/>
        <end position="364"/>
    </location>
</feature>
<feature type="DNA-binding region" evidence="3">
    <location>
        <begin position="156"/>
        <end position="206"/>
    </location>
</feature>
<feature type="region of interest" description="Disordered" evidence="4">
    <location>
        <begin position="1"/>
        <end position="164"/>
    </location>
</feature>
<feature type="region of interest" description="Disordered" evidence="4">
    <location>
        <begin position="335"/>
        <end position="357"/>
    </location>
</feature>
<feature type="compositionally biased region" description="Acidic residues" evidence="4">
    <location>
        <begin position="40"/>
        <end position="75"/>
    </location>
</feature>
<feature type="compositionally biased region" description="Basic and acidic residues" evidence="4">
    <location>
        <begin position="127"/>
        <end position="142"/>
    </location>
</feature>
<feature type="compositionally biased region" description="Pro residues" evidence="4">
    <location>
        <begin position="341"/>
        <end position="351"/>
    </location>
</feature>
<feature type="modified residue" description="Phosphoserine" evidence="1">
    <location>
        <position position="129"/>
    </location>
</feature>
<feature type="cross-link" description="Glycyl lysine isopeptide (Lys-Gly) (interchain with G-Cter in SUMO2)" evidence="1">
    <location>
        <position position="115"/>
    </location>
</feature>
<feature type="sequence conflict" description="In Ref. 2; AAI09640." evidence="5" ref="2">
    <original>P</original>
    <variation>T</variation>
    <location>
        <position position="254"/>
    </location>
</feature>
<accession>Q5E9F6</accession>
<accession>Q2TBU7</accession>